<name>RS5_ACIF2</name>
<sequence length="176" mass="18743">MARENRDTQPNDGMQEKLIHINRVSKVVKGGRQFGFAALMVVGDGDGKVGFGRGKAKEVPAGIQKATDQARRWMTSIPLMRGGTIPYPVEGRHGAARVMLRPAPEGSGVIAGGAMRAVCEAVGLRNVVAKSLGSNNPINVVRATFDAFDKLISPQAIAMKRGKSLKEIRGQGGHDE</sequence>
<reference key="1">
    <citation type="journal article" date="2008" name="BMC Genomics">
        <title>Acidithiobacillus ferrooxidans metabolism: from genome sequence to industrial applications.</title>
        <authorList>
            <person name="Valdes J."/>
            <person name="Pedroso I."/>
            <person name="Quatrini R."/>
            <person name="Dodson R.J."/>
            <person name="Tettelin H."/>
            <person name="Blake R. II"/>
            <person name="Eisen J.A."/>
            <person name="Holmes D.S."/>
        </authorList>
    </citation>
    <scope>NUCLEOTIDE SEQUENCE [LARGE SCALE GENOMIC DNA]</scope>
    <source>
        <strain>ATCC 23270 / DSM 14882 / CIP 104768 / NCIMB 8455</strain>
    </source>
</reference>
<accession>B7J484</accession>
<proteinExistence type="inferred from homology"/>
<organism>
    <name type="scientific">Acidithiobacillus ferrooxidans (strain ATCC 23270 / DSM 14882 / CIP 104768 / NCIMB 8455)</name>
    <name type="common">Ferrobacillus ferrooxidans (strain ATCC 23270)</name>
    <dbReference type="NCBI Taxonomy" id="243159"/>
    <lineage>
        <taxon>Bacteria</taxon>
        <taxon>Pseudomonadati</taxon>
        <taxon>Pseudomonadota</taxon>
        <taxon>Acidithiobacillia</taxon>
        <taxon>Acidithiobacillales</taxon>
        <taxon>Acidithiobacillaceae</taxon>
        <taxon>Acidithiobacillus</taxon>
    </lineage>
</organism>
<dbReference type="EMBL" id="CP001219">
    <property type="protein sequence ID" value="ACK78168.1"/>
    <property type="molecule type" value="Genomic_DNA"/>
</dbReference>
<dbReference type="RefSeq" id="WP_012536093.1">
    <property type="nucleotide sequence ID" value="NC_011761.1"/>
</dbReference>
<dbReference type="SMR" id="B7J484"/>
<dbReference type="STRING" id="243159.AFE_0344"/>
<dbReference type="PaxDb" id="243159-AFE_0344"/>
<dbReference type="GeneID" id="65279722"/>
<dbReference type="KEGG" id="afr:AFE_0344"/>
<dbReference type="eggNOG" id="COG0098">
    <property type="taxonomic scope" value="Bacteria"/>
</dbReference>
<dbReference type="HOGENOM" id="CLU_065898_2_2_6"/>
<dbReference type="Proteomes" id="UP000001362">
    <property type="component" value="Chromosome"/>
</dbReference>
<dbReference type="GO" id="GO:0015935">
    <property type="term" value="C:small ribosomal subunit"/>
    <property type="evidence" value="ECO:0007669"/>
    <property type="project" value="InterPro"/>
</dbReference>
<dbReference type="GO" id="GO:0019843">
    <property type="term" value="F:rRNA binding"/>
    <property type="evidence" value="ECO:0007669"/>
    <property type="project" value="UniProtKB-UniRule"/>
</dbReference>
<dbReference type="GO" id="GO:0003735">
    <property type="term" value="F:structural constituent of ribosome"/>
    <property type="evidence" value="ECO:0007669"/>
    <property type="project" value="InterPro"/>
</dbReference>
<dbReference type="GO" id="GO:0006412">
    <property type="term" value="P:translation"/>
    <property type="evidence" value="ECO:0007669"/>
    <property type="project" value="UniProtKB-UniRule"/>
</dbReference>
<dbReference type="FunFam" id="3.30.160.20:FF:000001">
    <property type="entry name" value="30S ribosomal protein S5"/>
    <property type="match status" value="1"/>
</dbReference>
<dbReference type="FunFam" id="3.30.230.10:FF:000002">
    <property type="entry name" value="30S ribosomal protein S5"/>
    <property type="match status" value="1"/>
</dbReference>
<dbReference type="Gene3D" id="3.30.160.20">
    <property type="match status" value="1"/>
</dbReference>
<dbReference type="Gene3D" id="3.30.230.10">
    <property type="match status" value="1"/>
</dbReference>
<dbReference type="HAMAP" id="MF_01307_B">
    <property type="entry name" value="Ribosomal_uS5_B"/>
    <property type="match status" value="1"/>
</dbReference>
<dbReference type="InterPro" id="IPR020568">
    <property type="entry name" value="Ribosomal_Su5_D2-typ_SF"/>
</dbReference>
<dbReference type="InterPro" id="IPR000851">
    <property type="entry name" value="Ribosomal_uS5"/>
</dbReference>
<dbReference type="InterPro" id="IPR005712">
    <property type="entry name" value="Ribosomal_uS5_bac-type"/>
</dbReference>
<dbReference type="InterPro" id="IPR005324">
    <property type="entry name" value="Ribosomal_uS5_C"/>
</dbReference>
<dbReference type="InterPro" id="IPR013810">
    <property type="entry name" value="Ribosomal_uS5_N"/>
</dbReference>
<dbReference type="InterPro" id="IPR014721">
    <property type="entry name" value="Ribsml_uS5_D2-typ_fold_subgr"/>
</dbReference>
<dbReference type="NCBIfam" id="TIGR01021">
    <property type="entry name" value="rpsE_bact"/>
    <property type="match status" value="1"/>
</dbReference>
<dbReference type="PANTHER" id="PTHR48277">
    <property type="entry name" value="MITOCHONDRIAL RIBOSOMAL PROTEIN S5"/>
    <property type="match status" value="1"/>
</dbReference>
<dbReference type="PANTHER" id="PTHR48277:SF1">
    <property type="entry name" value="MITOCHONDRIAL RIBOSOMAL PROTEIN S5"/>
    <property type="match status" value="1"/>
</dbReference>
<dbReference type="Pfam" id="PF00333">
    <property type="entry name" value="Ribosomal_S5"/>
    <property type="match status" value="1"/>
</dbReference>
<dbReference type="Pfam" id="PF03719">
    <property type="entry name" value="Ribosomal_S5_C"/>
    <property type="match status" value="1"/>
</dbReference>
<dbReference type="SUPFAM" id="SSF54768">
    <property type="entry name" value="dsRNA-binding domain-like"/>
    <property type="match status" value="1"/>
</dbReference>
<dbReference type="SUPFAM" id="SSF54211">
    <property type="entry name" value="Ribosomal protein S5 domain 2-like"/>
    <property type="match status" value="1"/>
</dbReference>
<dbReference type="PROSITE" id="PS50881">
    <property type="entry name" value="S5_DSRBD"/>
    <property type="match status" value="1"/>
</dbReference>
<evidence type="ECO:0000255" key="1">
    <source>
        <dbReference type="HAMAP-Rule" id="MF_01307"/>
    </source>
</evidence>
<evidence type="ECO:0000305" key="2"/>
<keyword id="KW-1185">Reference proteome</keyword>
<keyword id="KW-0687">Ribonucleoprotein</keyword>
<keyword id="KW-0689">Ribosomal protein</keyword>
<keyword id="KW-0694">RNA-binding</keyword>
<keyword id="KW-0699">rRNA-binding</keyword>
<comment type="function">
    <text evidence="1">With S4 and S12 plays an important role in translational accuracy.</text>
</comment>
<comment type="function">
    <text evidence="1">Located at the back of the 30S subunit body where it stabilizes the conformation of the head with respect to the body.</text>
</comment>
<comment type="subunit">
    <text evidence="1">Part of the 30S ribosomal subunit. Contacts proteins S4 and S8.</text>
</comment>
<comment type="domain">
    <text>The N-terminal domain interacts with the head of the 30S subunit; the C-terminal domain interacts with the body and contacts protein S4. The interaction surface between S4 and S5 is involved in control of translational fidelity.</text>
</comment>
<comment type="similarity">
    <text evidence="1">Belongs to the universal ribosomal protein uS5 family.</text>
</comment>
<protein>
    <recommendedName>
        <fullName evidence="1">Small ribosomal subunit protein uS5</fullName>
    </recommendedName>
    <alternativeName>
        <fullName evidence="2">30S ribosomal protein S5</fullName>
    </alternativeName>
</protein>
<gene>
    <name evidence="1" type="primary">rpsE</name>
    <name type="ordered locus">AFE_0344</name>
</gene>
<feature type="chain" id="PRO_1000140831" description="Small ribosomal subunit protein uS5">
    <location>
        <begin position="1"/>
        <end position="176"/>
    </location>
</feature>
<feature type="domain" description="S5 DRBM" evidence="1">
    <location>
        <begin position="14"/>
        <end position="77"/>
    </location>
</feature>